<feature type="chain" id="PRO_1000122190" description="Integration host factor subunit beta">
    <location>
        <begin position="1"/>
        <end position="107"/>
    </location>
</feature>
<feature type="region of interest" description="Disordered" evidence="2">
    <location>
        <begin position="76"/>
        <end position="107"/>
    </location>
</feature>
<feature type="compositionally biased region" description="Basic and acidic residues" evidence="2">
    <location>
        <begin position="82"/>
        <end position="101"/>
    </location>
</feature>
<accession>A0K5M4</accession>
<proteinExistence type="inferred from homology"/>
<evidence type="ECO:0000255" key="1">
    <source>
        <dbReference type="HAMAP-Rule" id="MF_00381"/>
    </source>
</evidence>
<evidence type="ECO:0000256" key="2">
    <source>
        <dbReference type="SAM" id="MobiDB-lite"/>
    </source>
</evidence>
<dbReference type="EMBL" id="CP000458">
    <property type="protein sequence ID" value="ABK07801.1"/>
    <property type="molecule type" value="Genomic_DNA"/>
</dbReference>
<dbReference type="RefSeq" id="WP_011544886.1">
    <property type="nucleotide sequence ID" value="NC_008542.1"/>
</dbReference>
<dbReference type="SMR" id="A0K5M4"/>
<dbReference type="KEGG" id="bch:Bcen2424_1048"/>
<dbReference type="HOGENOM" id="CLU_105066_2_0_4"/>
<dbReference type="GO" id="GO:0005694">
    <property type="term" value="C:chromosome"/>
    <property type="evidence" value="ECO:0007669"/>
    <property type="project" value="InterPro"/>
</dbReference>
<dbReference type="GO" id="GO:0005829">
    <property type="term" value="C:cytosol"/>
    <property type="evidence" value="ECO:0007669"/>
    <property type="project" value="TreeGrafter"/>
</dbReference>
<dbReference type="GO" id="GO:0003677">
    <property type="term" value="F:DNA binding"/>
    <property type="evidence" value="ECO:0007669"/>
    <property type="project" value="UniProtKB-UniRule"/>
</dbReference>
<dbReference type="GO" id="GO:0030527">
    <property type="term" value="F:structural constituent of chromatin"/>
    <property type="evidence" value="ECO:0007669"/>
    <property type="project" value="InterPro"/>
</dbReference>
<dbReference type="GO" id="GO:0006310">
    <property type="term" value="P:DNA recombination"/>
    <property type="evidence" value="ECO:0007669"/>
    <property type="project" value="UniProtKB-UniRule"/>
</dbReference>
<dbReference type="GO" id="GO:0006355">
    <property type="term" value="P:regulation of DNA-templated transcription"/>
    <property type="evidence" value="ECO:0007669"/>
    <property type="project" value="UniProtKB-UniRule"/>
</dbReference>
<dbReference type="GO" id="GO:0006417">
    <property type="term" value="P:regulation of translation"/>
    <property type="evidence" value="ECO:0007669"/>
    <property type="project" value="UniProtKB-UniRule"/>
</dbReference>
<dbReference type="CDD" id="cd13836">
    <property type="entry name" value="IHF_B"/>
    <property type="match status" value="1"/>
</dbReference>
<dbReference type="Gene3D" id="4.10.520.10">
    <property type="entry name" value="IHF-like DNA-binding proteins"/>
    <property type="match status" value="1"/>
</dbReference>
<dbReference type="HAMAP" id="MF_00381">
    <property type="entry name" value="IHF_beta"/>
    <property type="match status" value="1"/>
</dbReference>
<dbReference type="InterPro" id="IPR000119">
    <property type="entry name" value="Hist_DNA-bd"/>
</dbReference>
<dbReference type="InterPro" id="IPR010992">
    <property type="entry name" value="IHF-like_DNA-bd_dom_sf"/>
</dbReference>
<dbReference type="InterPro" id="IPR005685">
    <property type="entry name" value="IHF_beta"/>
</dbReference>
<dbReference type="NCBIfam" id="TIGR00988">
    <property type="entry name" value="hip"/>
    <property type="match status" value="1"/>
</dbReference>
<dbReference type="NCBIfam" id="NF001222">
    <property type="entry name" value="PRK00199.1"/>
    <property type="match status" value="1"/>
</dbReference>
<dbReference type="PANTHER" id="PTHR33175">
    <property type="entry name" value="DNA-BINDING PROTEIN HU"/>
    <property type="match status" value="1"/>
</dbReference>
<dbReference type="PANTHER" id="PTHR33175:SF5">
    <property type="entry name" value="INTEGRATION HOST FACTOR SUBUNIT BETA"/>
    <property type="match status" value="1"/>
</dbReference>
<dbReference type="Pfam" id="PF00216">
    <property type="entry name" value="Bac_DNA_binding"/>
    <property type="match status" value="1"/>
</dbReference>
<dbReference type="PRINTS" id="PR01727">
    <property type="entry name" value="DNABINDINGHU"/>
</dbReference>
<dbReference type="SMART" id="SM00411">
    <property type="entry name" value="BHL"/>
    <property type="match status" value="1"/>
</dbReference>
<dbReference type="SUPFAM" id="SSF47729">
    <property type="entry name" value="IHF-like DNA-binding proteins"/>
    <property type="match status" value="1"/>
</dbReference>
<name>IHFB_BURCH</name>
<sequence length="107" mass="11913">MTKSELVAQLASRFPQLVLKDADFAVKTMLDAMSDALAKGHRIEIRGFGSFGLNRRPARVGRNPKSGEKVQVPEKFVPHFKPGKELRERVDGRAGEPLKADDPDDDR</sequence>
<reference key="1">
    <citation type="submission" date="2006-08" db="EMBL/GenBank/DDBJ databases">
        <title>Complete sequence of chromosome 1 of Burkholderia cenocepacia HI2424.</title>
        <authorList>
            <person name="Copeland A."/>
            <person name="Lucas S."/>
            <person name="Lapidus A."/>
            <person name="Barry K."/>
            <person name="Detter J.C."/>
            <person name="Glavina del Rio T."/>
            <person name="Hammon N."/>
            <person name="Israni S."/>
            <person name="Pitluck S."/>
            <person name="Chain P."/>
            <person name="Malfatti S."/>
            <person name="Shin M."/>
            <person name="Vergez L."/>
            <person name="Schmutz J."/>
            <person name="Larimer F."/>
            <person name="Land M."/>
            <person name="Hauser L."/>
            <person name="Kyrpides N."/>
            <person name="Kim E."/>
            <person name="LiPuma J.J."/>
            <person name="Gonzalez C.F."/>
            <person name="Konstantinidis K."/>
            <person name="Tiedje J.M."/>
            <person name="Richardson P."/>
        </authorList>
    </citation>
    <scope>NUCLEOTIDE SEQUENCE [LARGE SCALE GENOMIC DNA]</scope>
    <source>
        <strain>HI2424</strain>
    </source>
</reference>
<keyword id="KW-0233">DNA recombination</keyword>
<keyword id="KW-0238">DNA-binding</keyword>
<keyword id="KW-0804">Transcription</keyword>
<keyword id="KW-0805">Transcription regulation</keyword>
<keyword id="KW-0810">Translation regulation</keyword>
<protein>
    <recommendedName>
        <fullName evidence="1">Integration host factor subunit beta</fullName>
        <shortName evidence="1">IHF-beta</shortName>
    </recommendedName>
</protein>
<organism>
    <name type="scientific">Burkholderia cenocepacia (strain HI2424)</name>
    <dbReference type="NCBI Taxonomy" id="331272"/>
    <lineage>
        <taxon>Bacteria</taxon>
        <taxon>Pseudomonadati</taxon>
        <taxon>Pseudomonadota</taxon>
        <taxon>Betaproteobacteria</taxon>
        <taxon>Burkholderiales</taxon>
        <taxon>Burkholderiaceae</taxon>
        <taxon>Burkholderia</taxon>
        <taxon>Burkholderia cepacia complex</taxon>
    </lineage>
</organism>
<gene>
    <name evidence="1" type="primary">ihfB</name>
    <name evidence="1" type="synonym">himD</name>
    <name type="ordered locus">Bcen2424_1048</name>
</gene>
<comment type="function">
    <text evidence="1">This protein is one of the two subunits of integration host factor, a specific DNA-binding protein that functions in genetic recombination as well as in transcriptional and translational control.</text>
</comment>
<comment type="subunit">
    <text evidence="1">Heterodimer of an alpha and a beta chain.</text>
</comment>
<comment type="similarity">
    <text evidence="1">Belongs to the bacterial histone-like protein family.</text>
</comment>